<name>ARFB_METV3</name>
<proteinExistence type="inferred from homology"/>
<sequence>MDNFELRLNSGKLIDNDSKVHEIGVIAMGSYLENHGSALPIDTDIKIASYVALNVALTTGAKFLGTVCTATEYDYIKHGIHNSLEDILEELEEIIIKYSKIGVNKFLIINCHGGNSDVSKKIEQLQEKIRNNFKEYGTTEKELEYIKKIKYNFKEYGNTEKINIKIKSFGYIHAYSEELSIGKCIGIYDETKFNKHTPENYGEIGMVGLPEARLNNKYIDKEAKMVESIPAVVNEQYGEELIKKMVNESIEYIREFLMLK</sequence>
<gene>
    <name evidence="2" type="primary">arfB</name>
    <name type="ordered locus">Mvol_1322</name>
</gene>
<feature type="chain" id="PRO_0000406930" description="2-amino-5-formylamino-6-ribosylaminopyrimidin-4(3H)-one 5'-monophosphate deformylase">
    <location>
        <begin position="1"/>
        <end position="260"/>
    </location>
</feature>
<feature type="binding site" evidence="2">
    <location>
        <position position="33"/>
    </location>
    <ligand>
        <name>Fe cation</name>
        <dbReference type="ChEBI" id="CHEBI:24875"/>
        <label>1</label>
    </ligand>
</feature>
<feature type="binding site" evidence="2">
    <location>
        <position position="35"/>
    </location>
    <ligand>
        <name>Fe cation</name>
        <dbReference type="ChEBI" id="CHEBI:24875"/>
        <label>2</label>
    </ligand>
</feature>
<feature type="binding site" evidence="2">
    <location>
        <position position="44"/>
    </location>
    <ligand>
        <name>Fe cation</name>
        <dbReference type="ChEBI" id="CHEBI:24875"/>
        <label>1</label>
    </ligand>
</feature>
<feature type="binding site" evidence="2">
    <location>
        <position position="44"/>
    </location>
    <ligand>
        <name>Fe cation</name>
        <dbReference type="ChEBI" id="CHEBI:24875"/>
        <label>2</label>
    </ligand>
</feature>
<feature type="binding site" evidence="2">
    <location>
        <position position="112"/>
    </location>
    <ligand>
        <name>Fe cation</name>
        <dbReference type="ChEBI" id="CHEBI:24875"/>
        <label>1</label>
    </ligand>
</feature>
<protein>
    <recommendedName>
        <fullName evidence="2">2-amino-5-formylamino-6-ribosylaminopyrimidin-4(3H)-one 5'-monophosphate deformylase</fullName>
        <shortName evidence="2">FAPy deformylase</shortName>
        <ecNumber evidence="2">3.5.1.102</ecNumber>
    </recommendedName>
    <alternativeName>
        <fullName evidence="2">Formamide hydrolase</fullName>
    </alternativeName>
</protein>
<organism>
    <name type="scientific">Methanococcus voltae (strain ATCC BAA-1334 / A3)</name>
    <dbReference type="NCBI Taxonomy" id="456320"/>
    <lineage>
        <taxon>Archaea</taxon>
        <taxon>Methanobacteriati</taxon>
        <taxon>Methanobacteriota</taxon>
        <taxon>Methanomada group</taxon>
        <taxon>Methanococci</taxon>
        <taxon>Methanococcales</taxon>
        <taxon>Methanococcaceae</taxon>
        <taxon>Methanococcus</taxon>
    </lineage>
</organism>
<keyword id="KW-0378">Hydrolase</keyword>
<keyword id="KW-0408">Iron</keyword>
<keyword id="KW-0479">Metal-binding</keyword>
<keyword id="KW-1185">Reference proteome</keyword>
<keyword id="KW-0862">Zinc</keyword>
<reference key="1">
    <citation type="submission" date="2010-05" db="EMBL/GenBank/DDBJ databases">
        <title>Complete sequence of Methanococcus voltae A3.</title>
        <authorList>
            <consortium name="US DOE Joint Genome Institute"/>
            <person name="Lucas S."/>
            <person name="Copeland A."/>
            <person name="Lapidus A."/>
            <person name="Cheng J.-F."/>
            <person name="Bruce D."/>
            <person name="Goodwin L."/>
            <person name="Pitluck S."/>
            <person name="Lowry S."/>
            <person name="Clum A."/>
            <person name="Land M."/>
            <person name="Hauser L."/>
            <person name="Kyrpides N."/>
            <person name="Mikhailova N."/>
            <person name="Whitman W.B."/>
            <person name="Woyke T."/>
        </authorList>
    </citation>
    <scope>NUCLEOTIDE SEQUENCE [LARGE SCALE GENOMIC DNA]</scope>
    <source>
        <strain>ATCC BAA-1334 / A3</strain>
    </source>
</reference>
<dbReference type="EC" id="3.5.1.102" evidence="2"/>
<dbReference type="EMBL" id="CP002057">
    <property type="protein sequence ID" value="ADI36978.1"/>
    <property type="molecule type" value="Genomic_DNA"/>
</dbReference>
<dbReference type="SMR" id="D7DV18"/>
<dbReference type="FunCoup" id="D7DV18">
    <property type="interactions" value="8"/>
</dbReference>
<dbReference type="STRING" id="456320.Mvol_1322"/>
<dbReference type="KEGG" id="mvo:Mvol_1322"/>
<dbReference type="eggNOG" id="arCOG04536">
    <property type="taxonomic scope" value="Archaea"/>
</dbReference>
<dbReference type="HOGENOM" id="CLU_1192640_0_0_2"/>
<dbReference type="InParanoid" id="D7DV18"/>
<dbReference type="OrthoDB" id="46121at2157"/>
<dbReference type="UniPathway" id="UPA00071"/>
<dbReference type="UniPathway" id="UPA00275"/>
<dbReference type="Proteomes" id="UP000007722">
    <property type="component" value="Chromosome"/>
</dbReference>
<dbReference type="GO" id="GO:0043729">
    <property type="term" value="F:2-amino-5-formylamino-6-(5-phosphoribosylamino)pyrimidin-4(3H)-one formate-lyase activity"/>
    <property type="evidence" value="ECO:0007669"/>
    <property type="project" value="UniProtKB-EC"/>
</dbReference>
<dbReference type="GO" id="GO:0008198">
    <property type="term" value="F:ferrous iron binding"/>
    <property type="evidence" value="ECO:0007669"/>
    <property type="project" value="UniProtKB-UniRule"/>
</dbReference>
<dbReference type="GO" id="GO:0052645">
    <property type="term" value="P:F420-0 metabolic process"/>
    <property type="evidence" value="ECO:0007669"/>
    <property type="project" value="UniProtKB-UniRule"/>
</dbReference>
<dbReference type="GO" id="GO:0009231">
    <property type="term" value="P:riboflavin biosynthetic process"/>
    <property type="evidence" value="ECO:0007669"/>
    <property type="project" value="UniProtKB-UniRule"/>
</dbReference>
<dbReference type="Gene3D" id="3.40.50.10310">
    <property type="entry name" value="Creatininase"/>
    <property type="match status" value="1"/>
</dbReference>
<dbReference type="HAMAP" id="MF_02116">
    <property type="entry name" value="FAPy_deform"/>
    <property type="match status" value="1"/>
</dbReference>
<dbReference type="InterPro" id="IPR024087">
    <property type="entry name" value="Creatininase-like_sf"/>
</dbReference>
<dbReference type="InterPro" id="IPR003785">
    <property type="entry name" value="Creatininase/forma_Hydrolase"/>
</dbReference>
<dbReference type="InterPro" id="IPR024901">
    <property type="entry name" value="FAPy_deformylase"/>
</dbReference>
<dbReference type="NCBIfam" id="NF033501">
    <property type="entry name" value="ArfB_arch_rifla"/>
    <property type="match status" value="1"/>
</dbReference>
<dbReference type="PANTHER" id="PTHR35005:SF1">
    <property type="entry name" value="2-AMINO-5-FORMYLAMINO-6-RIBOSYLAMINOPYRIMIDIN-4(3H)-ONE 5'-MONOPHOSPHATE DEFORMYLASE"/>
    <property type="match status" value="1"/>
</dbReference>
<dbReference type="PANTHER" id="PTHR35005">
    <property type="entry name" value="3-DEHYDRO-SCYLLO-INOSOSE HYDROLASE"/>
    <property type="match status" value="1"/>
</dbReference>
<dbReference type="Pfam" id="PF02633">
    <property type="entry name" value="Creatininase"/>
    <property type="match status" value="1"/>
</dbReference>
<dbReference type="SUPFAM" id="SSF102215">
    <property type="entry name" value="Creatininase"/>
    <property type="match status" value="1"/>
</dbReference>
<evidence type="ECO:0000250" key="1"/>
<evidence type="ECO:0000255" key="2">
    <source>
        <dbReference type="HAMAP-Rule" id="MF_02116"/>
    </source>
</evidence>
<comment type="function">
    <text evidence="2">Catalyzes the hydrolysis of the formamide of 2-amino-5-formylamino-6-ribosylamino-4(3H)-pyrimidinone 5'-monophosphate (FAPy) to form 2,5-diamino-6-ribosylamino-4(3H)-pyrimidinone 5'-phosphate (APy).</text>
</comment>
<comment type="catalytic activity">
    <reaction evidence="2">
        <text>2-amino-5-formylamino-6-(5-phospho-D-ribosylamino)pyrimidin-4(3H)-one + H2O = 2,5-diamino-6-(1-D-ribosylamino)pyrimidin-4(3H)-one 5'-phosphate + formate + H(+)</text>
        <dbReference type="Rhea" id="RHEA:27282"/>
        <dbReference type="ChEBI" id="CHEBI:15377"/>
        <dbReference type="ChEBI" id="CHEBI:15378"/>
        <dbReference type="ChEBI" id="CHEBI:15740"/>
        <dbReference type="ChEBI" id="CHEBI:57258"/>
        <dbReference type="ChEBI" id="CHEBI:59545"/>
        <dbReference type="EC" id="3.5.1.102"/>
    </reaction>
</comment>
<comment type="cofactor">
    <cofactor evidence="1">
        <name>Fe(2+)</name>
        <dbReference type="ChEBI" id="CHEBI:29033"/>
    </cofactor>
    <text evidence="1">Requires one Fe(2+) ion for activity.</text>
</comment>
<comment type="cofactor">
    <cofactor evidence="1">
        <name>Fe(2+)</name>
        <dbReference type="ChEBI" id="CHEBI:29033"/>
    </cofactor>
    <cofactor evidence="1">
        <name>Zn(2+)</name>
        <dbReference type="ChEBI" id="CHEBI:29105"/>
    </cofactor>
    <text evidence="1">Requires an additional second metal ion that could be Fe(2+) or Zn(2+).</text>
</comment>
<comment type="pathway">
    <text evidence="2">Cofactor biosynthesis; coenzyme F420 biosynthesis.</text>
</comment>
<comment type="pathway">
    <text evidence="2">Cofactor biosynthesis; riboflavin biosynthesis.</text>
</comment>
<comment type="subunit">
    <text evidence="2">Homodimer.</text>
</comment>
<comment type="similarity">
    <text evidence="2">Belongs to the creatininase superfamily. FAPy deformylase family.</text>
</comment>
<accession>D7DV18</accession>